<gene>
    <name type="primary">ZP4</name>
    <name type="synonym">ZPB</name>
    <name type="synonym">ZPX</name>
</gene>
<evidence type="ECO:0000250" key="1"/>
<evidence type="ECO:0000255" key="2"/>
<evidence type="ECO:0000255" key="3">
    <source>
        <dbReference type="PROSITE-ProRule" id="PRU00375"/>
    </source>
</evidence>
<evidence type="ECO:0000255" key="4">
    <source>
        <dbReference type="PROSITE-ProRule" id="PRU00779"/>
    </source>
</evidence>
<evidence type="ECO:0000269" key="5">
    <source>
    </source>
</evidence>
<evidence type="ECO:0000269" key="6">
    <source>
    </source>
</evidence>
<evidence type="ECO:0000269" key="7">
    <source>
    </source>
</evidence>
<evidence type="ECO:0000305" key="8"/>
<protein>
    <recommendedName>
        <fullName>Zona pellucida sperm-binding protein 4</fullName>
    </recommendedName>
    <alternativeName>
        <fullName>RC55</fullName>
    </alternativeName>
    <alternativeName>
        <fullName>Zona pellucida glycoprotein 4</fullName>
        <shortName>Zp-4</shortName>
    </alternativeName>
    <alternativeName>
        <fullName>Zona pellucida glycoprotein X</fullName>
        <shortName>Zp-X</shortName>
    </alternativeName>
    <alternativeName>
        <fullName>Zona pellucida protein B</fullName>
    </alternativeName>
    <component>
        <recommendedName>
            <fullName>Processed zona pellucida sperm-binding protein 4</fullName>
        </recommendedName>
    </component>
</protein>
<accession>Q00193</accession>
<comment type="function">
    <text>Component of the zona pellucida, an extracellular matrix surrounding oocytes which mediates sperm binding, induction of the acrosome reaction and prevents post-fertilization polyspermy. The zona pellucida is composed of 3 to 4 glycoproteins, ZP1, ZP2, ZP3, and ZP4. ZP4 may act as a sperm receptor.</text>
</comment>
<comment type="subcellular location">
    <molecule>Processed zona pellucida sperm-binding protein 4</molecule>
    <subcellularLocation>
        <location evidence="6">Zona pellucida</location>
    </subcellularLocation>
</comment>
<comment type="subcellular location">
    <subcellularLocation>
        <location evidence="6">Cell membrane</location>
        <topology evidence="2">Single-pass type I membrane protein</topology>
    </subcellularLocation>
</comment>
<comment type="tissue specificity">
    <text evidence="6">Expressed in oocytes (at protein level).</text>
</comment>
<comment type="domain">
    <text evidence="7">The ZP domain is involved in the polymerization of the ZP proteins to form the zona pellucida.</text>
</comment>
<comment type="PTM">
    <text>Proteolytically cleaved before the transmembrane segment to yield the secreted ectodomain incorporated in the zona pellucida.</text>
</comment>
<comment type="similarity">
    <text evidence="8">Belongs to the ZP domain family. ZPB subfamily.</text>
</comment>
<keyword id="KW-1003">Cell membrane</keyword>
<keyword id="KW-0165">Cleavage on pair of basic residues</keyword>
<keyword id="KW-0903">Direct protein sequencing</keyword>
<keyword id="KW-1015">Disulfide bond</keyword>
<keyword id="KW-0272">Extracellular matrix</keyword>
<keyword id="KW-0278">Fertilization</keyword>
<keyword id="KW-0325">Glycoprotein</keyword>
<keyword id="KW-0472">Membrane</keyword>
<keyword id="KW-0675">Receptor</keyword>
<keyword id="KW-1185">Reference proteome</keyword>
<keyword id="KW-0964">Secreted</keyword>
<keyword id="KW-0732">Signal</keyword>
<keyword id="KW-0812">Transmembrane</keyword>
<keyword id="KW-1133">Transmembrane helix</keyword>
<feature type="signal peptide" evidence="5">
    <location>
        <begin position="1"/>
        <end position="24"/>
    </location>
</feature>
<feature type="chain" id="PRO_0000041731" description="Zona pellucida sperm-binding protein 4">
    <location>
        <begin position="25"/>
        <end position="466"/>
    </location>
</feature>
<feature type="chain" id="PRO_0000304580" description="Processed zona pellucida sperm-binding protein 4">
    <location>
        <begin position="25"/>
        <end status="unknown"/>
    </location>
</feature>
<feature type="propeptide" id="PRO_0000041732" description="Removed in mature form" evidence="1">
    <location>
        <begin position="467"/>
        <end position="540"/>
    </location>
</feature>
<feature type="topological domain" description="Extracellular" evidence="2">
    <location>
        <begin position="25"/>
        <end position="515"/>
    </location>
</feature>
<feature type="transmembrane region" description="Helical" evidence="2">
    <location>
        <begin position="516"/>
        <end position="536"/>
    </location>
</feature>
<feature type="topological domain" description="Cytoplasmic" evidence="2">
    <location>
        <begin position="537"/>
        <end position="540"/>
    </location>
</feature>
<feature type="domain" description="P-type" evidence="4">
    <location>
        <begin position="145"/>
        <end position="187"/>
    </location>
</feature>
<feature type="domain" description="ZP" evidence="3">
    <location>
        <begin position="192"/>
        <end position="470"/>
    </location>
</feature>
<feature type="glycosylation site" description="N-linked (GlcNAc...) asparagine" evidence="2">
    <location>
        <position position="76"/>
    </location>
</feature>
<feature type="glycosylation site" description="N-linked (GlcNAc...) asparagine" evidence="2">
    <location>
        <position position="97"/>
    </location>
</feature>
<feature type="glycosylation site" description="N-linked (GlcNAc...) asparagine" evidence="1">
    <location>
        <position position="206"/>
    </location>
</feature>
<feature type="glycosylation site" description="N-linked (GlcNAc...) asparagine" evidence="1">
    <location>
        <position position="223"/>
    </location>
</feature>
<feature type="glycosylation site" description="O-linked (GalNAc...) serine" evidence="1">
    <location>
        <position position="296"/>
    </location>
</feature>
<feature type="glycosylation site" description="O-linked (GalNAc...) threonine" evidence="1">
    <location>
        <position position="306"/>
    </location>
</feature>
<feature type="glycosylation site" description="N-linked (GlcNAc...) asparagine" evidence="2">
    <location>
        <position position="478"/>
    </location>
</feature>
<feature type="glycosylation site" description="N-linked (GlcNAc...) asparagine" evidence="2">
    <location>
        <position position="482"/>
    </location>
</feature>
<feature type="disulfide bond" evidence="4">
    <location>
        <begin position="371"/>
        <end position="446"/>
    </location>
</feature>
<organism>
    <name type="scientific">Oryctolagus cuniculus</name>
    <name type="common">Rabbit</name>
    <dbReference type="NCBI Taxonomy" id="9986"/>
    <lineage>
        <taxon>Eukaryota</taxon>
        <taxon>Metazoa</taxon>
        <taxon>Chordata</taxon>
        <taxon>Craniata</taxon>
        <taxon>Vertebrata</taxon>
        <taxon>Euteleostomi</taxon>
        <taxon>Mammalia</taxon>
        <taxon>Eutheria</taxon>
        <taxon>Euarchontoglires</taxon>
        <taxon>Glires</taxon>
        <taxon>Lagomorpha</taxon>
        <taxon>Leporidae</taxon>
        <taxon>Oryctolagus</taxon>
    </lineage>
</organism>
<reference key="1">
    <citation type="journal article" date="1991" name="J. Biol. Chem.">
        <title>Isolation and characterization of a full-length cDNA encoding the 55-kDa rabbit zona pellucida protein.</title>
        <authorList>
            <person name="Schwoebel E."/>
            <person name="Prasad S."/>
            <person name="Timmons T.M."/>
            <person name="Cook R."/>
            <person name="Kimura H."/>
            <person name="Niu E.-M."/>
            <person name="Cheung P."/>
            <person name="Skinner S."/>
            <person name="Avery S.E."/>
            <person name="Wilkins B."/>
            <person name="Dunbar B.S."/>
        </authorList>
    </citation>
    <scope>NUCLEOTIDE SEQUENCE [MRNA]</scope>
    <scope>PROTEIN SEQUENCE OF 25-49</scope>
    <source>
        <tissue>Ovary</tissue>
    </source>
</reference>
<reference key="2">
    <citation type="journal article" date="1993" name="Protein Sci.">
        <title>A trefoil domain in the major rabbit zona pellucida protein.</title>
        <authorList>
            <person name="Bork P."/>
        </authorList>
    </citation>
    <scope>DOMAINS</scope>
</reference>
<reference key="3">
    <citation type="journal article" date="2012" name="J. Proteomics">
        <title>Rabbit zona pellucida composition: a molecular, proteomic and phylogenetic approach.</title>
        <authorList>
            <person name="Stetson I."/>
            <person name="Izquierdo-Rico M.J."/>
            <person name="Moros C."/>
            <person name="Chevret P."/>
            <person name="Lorenzo P.L."/>
            <person name="Ballesta J."/>
            <person name="Rebollar P.G."/>
            <person name="Gutierrez-Gallego R."/>
            <person name="Aviles M."/>
        </authorList>
    </citation>
    <scope>IDENTIFICATION BY MASS SPECTROMETRY</scope>
    <scope>SUBCELLULAR LOCATION</scope>
    <scope>TISSUE SPECIFICITY</scope>
    <source>
        <tissue>Ovary</tissue>
    </source>
</reference>
<proteinExistence type="evidence at protein level"/>
<sequence length="540" mass="59835">MAPGSTMWLLGYIFLCFPVSFALIKQPKPETPTDPGVLHCRPWNFKFTINFQNQETGSSPVLVTWDNQGRLHRLQNDTDCGTRVGEGPGPSVVLEANYSSCYVTESEPYYVMLVGVEEVDAAGQNLVTKQQLLKCPMHLPAPDAGLCDSVPVQDRLPCATAPISQEDCEELGCCHSSEEVNACYYGNTVTSHCTQEGHFSIAVSRNVSSPPLHLDSVHLVFGNDSECQPVVATRAFVLFLFPFTACGTTRQITGDRAIYENELLATREVRTWSRGSITRDSIFRLRVSCSYSISSSALPVDMHVLTLPPPLPETQPGPLTVVLQIAKDKDYHSYYTMDDYPVVKLLRDPIYVDVSILYRTDPYLGLRLHQCWATPRTNPLYQPQWPILVKGCPYTGDNYQTQLIPVQEAFDLPFPSHHQRFSISTFSFLDSSVAKEALKGPIYLHCSVSVCQPTGTQSCTVTCPIDSRRRNSDINFQNSTANISSKGPMILLQATEDPSEKLHKHSGVPVHPGALWVAGLSGIFIIGALLVSYVAIRTRR</sequence>
<name>ZP4_RABIT</name>
<dbReference type="EMBL" id="M58160">
    <property type="protein sequence ID" value="AAA31501.1"/>
    <property type="molecule type" value="mRNA"/>
</dbReference>
<dbReference type="PIR" id="A39783">
    <property type="entry name" value="A39783"/>
</dbReference>
<dbReference type="RefSeq" id="NP_001075764.1">
    <property type="nucleotide sequence ID" value="NM_001082295.2"/>
</dbReference>
<dbReference type="SMR" id="Q00193"/>
<dbReference type="STRING" id="9986.ENSOCUP00000022164"/>
<dbReference type="GlyCosmos" id="Q00193">
    <property type="glycosylation" value="8 sites, No reported glycans"/>
</dbReference>
<dbReference type="PaxDb" id="9986-ENSOCUP00000022164"/>
<dbReference type="Ensembl" id="ENSOCUT00000032066.3">
    <property type="protein sequence ID" value="ENSOCUP00000022164.1"/>
    <property type="gene ID" value="ENSOCUG00000002467.4"/>
</dbReference>
<dbReference type="GeneID" id="100009131"/>
<dbReference type="KEGG" id="ocu:100009131"/>
<dbReference type="CTD" id="57829"/>
<dbReference type="eggNOG" id="ENOG502QU54">
    <property type="taxonomic scope" value="Eukaryota"/>
</dbReference>
<dbReference type="GeneTree" id="ENSGT00940000161324"/>
<dbReference type="HOGENOM" id="CLU_034433_0_0_1"/>
<dbReference type="InParanoid" id="Q00193"/>
<dbReference type="OMA" id="LNCPDQT"/>
<dbReference type="OrthoDB" id="8919081at2759"/>
<dbReference type="TreeFam" id="TF332794"/>
<dbReference type="Proteomes" id="UP000001811">
    <property type="component" value="Chromosome 16"/>
</dbReference>
<dbReference type="Bgee" id="ENSOCUG00000002467">
    <property type="expression patterns" value="Expressed in ovary and 3 other cell types or tissues"/>
</dbReference>
<dbReference type="GO" id="GO:0035805">
    <property type="term" value="C:egg coat"/>
    <property type="evidence" value="ECO:0000250"/>
    <property type="project" value="UniProtKB"/>
</dbReference>
<dbReference type="GO" id="GO:0005576">
    <property type="term" value="C:extracellular region"/>
    <property type="evidence" value="ECO:0007669"/>
    <property type="project" value="UniProtKB-KW"/>
</dbReference>
<dbReference type="GO" id="GO:0005886">
    <property type="term" value="C:plasma membrane"/>
    <property type="evidence" value="ECO:0007669"/>
    <property type="project" value="UniProtKB-SubCell"/>
</dbReference>
<dbReference type="GO" id="GO:0032190">
    <property type="term" value="F:acrosin binding"/>
    <property type="evidence" value="ECO:0007669"/>
    <property type="project" value="Ensembl"/>
</dbReference>
<dbReference type="GO" id="GO:0042802">
    <property type="term" value="F:identical protein binding"/>
    <property type="evidence" value="ECO:0007669"/>
    <property type="project" value="Ensembl"/>
</dbReference>
<dbReference type="GO" id="GO:0035804">
    <property type="term" value="F:structural constituent of egg coat"/>
    <property type="evidence" value="ECO:0000314"/>
    <property type="project" value="UniProtKB"/>
</dbReference>
<dbReference type="GO" id="GO:0060478">
    <property type="term" value="P:acrosomal vesicle exocytosis"/>
    <property type="evidence" value="ECO:0007669"/>
    <property type="project" value="Ensembl"/>
</dbReference>
<dbReference type="GO" id="GO:0007339">
    <property type="term" value="P:binding of sperm to zona pellucida"/>
    <property type="evidence" value="ECO:0007669"/>
    <property type="project" value="TreeGrafter"/>
</dbReference>
<dbReference type="GO" id="GO:2000360">
    <property type="term" value="P:negative regulation of binding of sperm to zona pellucida"/>
    <property type="evidence" value="ECO:0007669"/>
    <property type="project" value="Ensembl"/>
</dbReference>
<dbReference type="GO" id="GO:2000344">
    <property type="term" value="P:positive regulation of acrosome reaction"/>
    <property type="evidence" value="ECO:0007669"/>
    <property type="project" value="Ensembl"/>
</dbReference>
<dbReference type="GO" id="GO:0002922">
    <property type="term" value="P:positive regulation of humoral immune response"/>
    <property type="evidence" value="ECO:0007669"/>
    <property type="project" value="Ensembl"/>
</dbReference>
<dbReference type="GO" id="GO:0042102">
    <property type="term" value="P:positive regulation of T cell proliferation"/>
    <property type="evidence" value="ECO:0007669"/>
    <property type="project" value="Ensembl"/>
</dbReference>
<dbReference type="GO" id="GO:0060468">
    <property type="term" value="P:prevention of polyspermy"/>
    <property type="evidence" value="ECO:0007669"/>
    <property type="project" value="TreeGrafter"/>
</dbReference>
<dbReference type="CDD" id="cd00111">
    <property type="entry name" value="Trefoil"/>
    <property type="match status" value="1"/>
</dbReference>
<dbReference type="FunFam" id="2.60.40.4100:FF:000004">
    <property type="entry name" value="Zona pellucida sperm-binding protein 2"/>
    <property type="match status" value="1"/>
</dbReference>
<dbReference type="FunFam" id="4.10.110.10:FF:000004">
    <property type="entry name" value="zona pellucida sperm-binding protein 4 isoform X1"/>
    <property type="match status" value="1"/>
</dbReference>
<dbReference type="Gene3D" id="4.10.110.10">
    <property type="entry name" value="Spasmolytic Protein, domain 1"/>
    <property type="match status" value="1"/>
</dbReference>
<dbReference type="Gene3D" id="2.60.40.4100">
    <property type="entry name" value="Zona pellucida, ZP-C domain"/>
    <property type="match status" value="1"/>
</dbReference>
<dbReference type="Gene3D" id="2.60.40.3210">
    <property type="entry name" value="Zona pellucida, ZP-N domain"/>
    <property type="match status" value="1"/>
</dbReference>
<dbReference type="InterPro" id="IPR017957">
    <property type="entry name" value="P_trefoil_CS"/>
</dbReference>
<dbReference type="InterPro" id="IPR000519">
    <property type="entry name" value="P_trefoil_dom"/>
</dbReference>
<dbReference type="InterPro" id="IPR044913">
    <property type="entry name" value="P_trefoil_dom_sf"/>
</dbReference>
<dbReference type="InterPro" id="IPR051148">
    <property type="entry name" value="Zona_Pellucida_Domain_gp"/>
</dbReference>
<dbReference type="InterPro" id="IPR055355">
    <property type="entry name" value="ZP-C"/>
</dbReference>
<dbReference type="InterPro" id="IPR042235">
    <property type="entry name" value="ZP-C_dom"/>
</dbReference>
<dbReference type="InterPro" id="IPR055356">
    <property type="entry name" value="ZP-N"/>
</dbReference>
<dbReference type="InterPro" id="IPR054554">
    <property type="entry name" value="ZP1/4_Ig-like"/>
</dbReference>
<dbReference type="InterPro" id="IPR048290">
    <property type="entry name" value="ZP_chr"/>
</dbReference>
<dbReference type="InterPro" id="IPR001507">
    <property type="entry name" value="ZP_dom"/>
</dbReference>
<dbReference type="InterPro" id="IPR017977">
    <property type="entry name" value="ZP_dom_CS"/>
</dbReference>
<dbReference type="PANTHER" id="PTHR23343">
    <property type="entry name" value="ZONA PELLUCIDA SPERM-BINDING PROTEIN"/>
    <property type="match status" value="1"/>
</dbReference>
<dbReference type="PANTHER" id="PTHR23343:SF31">
    <property type="entry name" value="ZONA PELLUCIDA SPERM-BINDING PROTEIN 4"/>
    <property type="match status" value="1"/>
</dbReference>
<dbReference type="Pfam" id="PF00088">
    <property type="entry name" value="Trefoil"/>
    <property type="match status" value="1"/>
</dbReference>
<dbReference type="Pfam" id="PF00100">
    <property type="entry name" value="Zona_pellucida"/>
    <property type="match status" value="1"/>
</dbReference>
<dbReference type="Pfam" id="PF23344">
    <property type="entry name" value="ZP-N"/>
    <property type="match status" value="1"/>
</dbReference>
<dbReference type="Pfam" id="PF22821">
    <property type="entry name" value="ZP1_ZP4_Ig-like"/>
    <property type="match status" value="1"/>
</dbReference>
<dbReference type="PRINTS" id="PR00023">
    <property type="entry name" value="ZPELLUCIDA"/>
</dbReference>
<dbReference type="SMART" id="SM00018">
    <property type="entry name" value="PD"/>
    <property type="match status" value="1"/>
</dbReference>
<dbReference type="SMART" id="SM00241">
    <property type="entry name" value="ZP"/>
    <property type="match status" value="1"/>
</dbReference>
<dbReference type="SUPFAM" id="SSF57492">
    <property type="entry name" value="Trefoil"/>
    <property type="match status" value="1"/>
</dbReference>
<dbReference type="PROSITE" id="PS00025">
    <property type="entry name" value="P_TREFOIL_1"/>
    <property type="match status" value="1"/>
</dbReference>
<dbReference type="PROSITE" id="PS51448">
    <property type="entry name" value="P_TREFOIL_2"/>
    <property type="match status" value="1"/>
</dbReference>
<dbReference type="PROSITE" id="PS00682">
    <property type="entry name" value="ZP_1"/>
    <property type="match status" value="1"/>
</dbReference>
<dbReference type="PROSITE" id="PS51034">
    <property type="entry name" value="ZP_2"/>
    <property type="match status" value="1"/>
</dbReference>